<gene>
    <name evidence="7" type="primary">Bdh1</name>
    <name evidence="4" type="synonym">Bdh</name>
</gene>
<keyword id="KW-0007">Acetylation</keyword>
<keyword id="KW-0021">Allosteric enzyme</keyword>
<keyword id="KW-0903">Direct protein sequencing</keyword>
<keyword id="KW-0325">Glycoprotein</keyword>
<keyword id="KW-0443">Lipid metabolism</keyword>
<keyword id="KW-0472">Membrane</keyword>
<keyword id="KW-0496">Mitochondrion</keyword>
<keyword id="KW-0999">Mitochondrion inner membrane</keyword>
<keyword id="KW-0520">NAD</keyword>
<keyword id="KW-0560">Oxidoreductase</keyword>
<keyword id="KW-0597">Phosphoprotein</keyword>
<keyword id="KW-1185">Reference proteome</keyword>
<keyword id="KW-0809">Transit peptide</keyword>
<organism>
    <name type="scientific">Mus musculus</name>
    <name type="common">Mouse</name>
    <dbReference type="NCBI Taxonomy" id="10090"/>
    <lineage>
        <taxon>Eukaryota</taxon>
        <taxon>Metazoa</taxon>
        <taxon>Chordata</taxon>
        <taxon>Craniata</taxon>
        <taxon>Vertebrata</taxon>
        <taxon>Euteleostomi</taxon>
        <taxon>Mammalia</taxon>
        <taxon>Eutheria</taxon>
        <taxon>Euarchontoglires</taxon>
        <taxon>Glires</taxon>
        <taxon>Rodentia</taxon>
        <taxon>Myomorpha</taxon>
        <taxon>Muroidea</taxon>
        <taxon>Muridae</taxon>
        <taxon>Murinae</taxon>
        <taxon>Mus</taxon>
        <taxon>Mus</taxon>
    </lineage>
</organism>
<evidence type="ECO:0000250" key="1"/>
<evidence type="ECO:0000250" key="2">
    <source>
        <dbReference type="UniProtKB" id="P29147"/>
    </source>
</evidence>
<evidence type="ECO:0000250" key="3">
    <source>
        <dbReference type="UniProtKB" id="Q02337"/>
    </source>
</evidence>
<evidence type="ECO:0000250" key="4">
    <source>
        <dbReference type="UniProtKB" id="Q02338"/>
    </source>
</evidence>
<evidence type="ECO:0000255" key="5">
    <source>
        <dbReference type="PROSITE-ProRule" id="PRU10001"/>
    </source>
</evidence>
<evidence type="ECO:0000305" key="6"/>
<evidence type="ECO:0000312" key="7">
    <source>
        <dbReference type="MGI" id="MGI:1919161"/>
    </source>
</evidence>
<evidence type="ECO:0007744" key="8">
    <source>
    </source>
</evidence>
<evidence type="ECO:0007744" key="9">
    <source>
    </source>
</evidence>
<dbReference type="EC" id="1.1.1.30" evidence="2"/>
<dbReference type="EMBL" id="AK076718">
    <property type="protein sequence ID" value="BAC36453.1"/>
    <property type="molecule type" value="mRNA"/>
</dbReference>
<dbReference type="EMBL" id="AK137955">
    <property type="protein sequence ID" value="BAE23523.1"/>
    <property type="molecule type" value="mRNA"/>
</dbReference>
<dbReference type="EMBL" id="AK145711">
    <property type="protein sequence ID" value="BAE26605.1"/>
    <property type="molecule type" value="mRNA"/>
</dbReference>
<dbReference type="EMBL" id="AK146321">
    <property type="protein sequence ID" value="BAE27076.1"/>
    <property type="molecule type" value="mRNA"/>
</dbReference>
<dbReference type="EMBL" id="BC027063">
    <property type="protein sequence ID" value="AAH27063.1"/>
    <property type="molecule type" value="mRNA"/>
</dbReference>
<dbReference type="EMBL" id="BC043683">
    <property type="protein sequence ID" value="AAH43683.1"/>
    <property type="molecule type" value="mRNA"/>
</dbReference>
<dbReference type="EMBL" id="BC096457">
    <property type="protein sequence ID" value="AAH96457.1"/>
    <property type="molecule type" value="mRNA"/>
</dbReference>
<dbReference type="CCDS" id="CCDS28106.1"/>
<dbReference type="RefSeq" id="NP_001116155.1">
    <property type="nucleotide sequence ID" value="NM_001122683.1"/>
</dbReference>
<dbReference type="RefSeq" id="NP_780386.3">
    <property type="nucleotide sequence ID" value="NM_175177.4"/>
</dbReference>
<dbReference type="RefSeq" id="XP_036016023.1">
    <property type="nucleotide sequence ID" value="XM_036160130.1"/>
</dbReference>
<dbReference type="SMR" id="Q80XN0"/>
<dbReference type="BioGRID" id="215024">
    <property type="interactions" value="11"/>
</dbReference>
<dbReference type="FunCoup" id="Q80XN0">
    <property type="interactions" value="847"/>
</dbReference>
<dbReference type="IntAct" id="Q80XN0">
    <property type="interactions" value="3"/>
</dbReference>
<dbReference type="STRING" id="10090.ENSMUSP00000110882"/>
<dbReference type="GlyCosmos" id="Q80XN0">
    <property type="glycosylation" value="1 site, No reported glycans"/>
</dbReference>
<dbReference type="GlyGen" id="Q80XN0">
    <property type="glycosylation" value="2 sites, 1 O-linked glycan (1 site)"/>
</dbReference>
<dbReference type="iPTMnet" id="Q80XN0"/>
<dbReference type="PhosphoSitePlus" id="Q80XN0"/>
<dbReference type="SwissPalm" id="Q80XN0"/>
<dbReference type="jPOST" id="Q80XN0"/>
<dbReference type="PaxDb" id="10090-ENSMUSP00000110882"/>
<dbReference type="PeptideAtlas" id="Q80XN0"/>
<dbReference type="ProteomicsDB" id="265169"/>
<dbReference type="Antibodypedia" id="33961">
    <property type="antibodies" value="244 antibodies from 30 providers"/>
</dbReference>
<dbReference type="DNASU" id="71911"/>
<dbReference type="Ensembl" id="ENSMUST00000089759.9">
    <property type="protein sequence ID" value="ENSMUSP00000087192.3"/>
    <property type="gene ID" value="ENSMUSG00000046598.16"/>
</dbReference>
<dbReference type="Ensembl" id="ENSMUST00000115226.8">
    <property type="protein sequence ID" value="ENSMUSP00000110881.2"/>
    <property type="gene ID" value="ENSMUSG00000046598.16"/>
</dbReference>
<dbReference type="Ensembl" id="ENSMUST00000115227.10">
    <property type="protein sequence ID" value="ENSMUSP00000110882.4"/>
    <property type="gene ID" value="ENSMUSG00000046598.16"/>
</dbReference>
<dbReference type="GeneID" id="71911"/>
<dbReference type="KEGG" id="mmu:71911"/>
<dbReference type="UCSC" id="uc007yxi.2">
    <property type="organism name" value="mouse"/>
</dbReference>
<dbReference type="AGR" id="MGI:1919161"/>
<dbReference type="CTD" id="622"/>
<dbReference type="MGI" id="MGI:1919161">
    <property type="gene designation" value="Bdh1"/>
</dbReference>
<dbReference type="VEuPathDB" id="HostDB:ENSMUSG00000046598"/>
<dbReference type="eggNOG" id="KOG1610">
    <property type="taxonomic scope" value="Eukaryota"/>
</dbReference>
<dbReference type="GeneTree" id="ENSGT00940000156929"/>
<dbReference type="HOGENOM" id="CLU_010194_2_0_1"/>
<dbReference type="InParanoid" id="Q80XN0"/>
<dbReference type="OMA" id="ITKMESY"/>
<dbReference type="OrthoDB" id="2102561at2759"/>
<dbReference type="PhylomeDB" id="Q80XN0"/>
<dbReference type="TreeFam" id="TF325617"/>
<dbReference type="Reactome" id="R-MMU-77108">
    <property type="pathway name" value="Utilization of Ketone Bodies"/>
</dbReference>
<dbReference type="Reactome" id="R-MMU-77111">
    <property type="pathway name" value="Synthesis of Ketone Bodies"/>
</dbReference>
<dbReference type="Reactome" id="R-MMU-9837999">
    <property type="pathway name" value="Mitochondrial protein degradation"/>
</dbReference>
<dbReference type="BioGRID-ORCS" id="71911">
    <property type="hits" value="3 hits in 80 CRISPR screens"/>
</dbReference>
<dbReference type="CD-CODE" id="CE726F99">
    <property type="entry name" value="Postsynaptic density"/>
</dbReference>
<dbReference type="ChiTaRS" id="Bdh1">
    <property type="organism name" value="mouse"/>
</dbReference>
<dbReference type="PRO" id="PR:Q80XN0"/>
<dbReference type="Proteomes" id="UP000000589">
    <property type="component" value="Chromosome 16"/>
</dbReference>
<dbReference type="RNAct" id="Q80XN0">
    <property type="molecule type" value="protein"/>
</dbReference>
<dbReference type="Bgee" id="ENSMUSG00000046598">
    <property type="expression patterns" value="Expressed in embryonic brain and 264 other cell types or tissues"/>
</dbReference>
<dbReference type="ExpressionAtlas" id="Q80XN0">
    <property type="expression patterns" value="baseline and differential"/>
</dbReference>
<dbReference type="GO" id="GO:0099617">
    <property type="term" value="C:matrix side of mitochondrial inner membrane"/>
    <property type="evidence" value="ECO:0000250"/>
    <property type="project" value="UniProtKB"/>
</dbReference>
<dbReference type="GO" id="GO:0005743">
    <property type="term" value="C:mitochondrial inner membrane"/>
    <property type="evidence" value="ECO:0007005"/>
    <property type="project" value="MGI"/>
</dbReference>
<dbReference type="GO" id="GO:0005759">
    <property type="term" value="C:mitochondrial matrix"/>
    <property type="evidence" value="ECO:0007669"/>
    <property type="project" value="UniProtKB-SubCell"/>
</dbReference>
<dbReference type="GO" id="GO:0005739">
    <property type="term" value="C:mitochondrion"/>
    <property type="evidence" value="ECO:0007005"/>
    <property type="project" value="MGI"/>
</dbReference>
<dbReference type="GO" id="GO:0003858">
    <property type="term" value="F:3-hydroxybutyrate dehydrogenase activity"/>
    <property type="evidence" value="ECO:0007669"/>
    <property type="project" value="UniProtKB-EC"/>
</dbReference>
<dbReference type="GO" id="GO:0006629">
    <property type="term" value="P:lipid metabolic process"/>
    <property type="evidence" value="ECO:0007669"/>
    <property type="project" value="UniProtKB-KW"/>
</dbReference>
<dbReference type="CDD" id="cd09805">
    <property type="entry name" value="type2_17beta_HSD-like_SDR_c"/>
    <property type="match status" value="1"/>
</dbReference>
<dbReference type="FunFam" id="3.40.50.720:FF:000074">
    <property type="entry name" value="Retinol dehydrogenase type 1"/>
    <property type="match status" value="1"/>
</dbReference>
<dbReference type="Gene3D" id="3.40.50.720">
    <property type="entry name" value="NAD(P)-binding Rossmann-like Domain"/>
    <property type="match status" value="1"/>
</dbReference>
<dbReference type="InterPro" id="IPR036291">
    <property type="entry name" value="NAD(P)-bd_dom_sf"/>
</dbReference>
<dbReference type="InterPro" id="IPR020904">
    <property type="entry name" value="Sc_DH/Rdtase_CS"/>
</dbReference>
<dbReference type="InterPro" id="IPR002347">
    <property type="entry name" value="SDR_fam"/>
</dbReference>
<dbReference type="PANTHER" id="PTHR43313:SF25">
    <property type="entry name" value="D-BETA-HYDROXYBUTYRATE DEHYDROGENASE, MITOCHONDRIAL"/>
    <property type="match status" value="1"/>
</dbReference>
<dbReference type="PANTHER" id="PTHR43313">
    <property type="entry name" value="SHORT-CHAIN DEHYDROGENASE/REDUCTASE FAMILY 9C"/>
    <property type="match status" value="1"/>
</dbReference>
<dbReference type="Pfam" id="PF00106">
    <property type="entry name" value="adh_short"/>
    <property type="match status" value="1"/>
</dbReference>
<dbReference type="PRINTS" id="PR00081">
    <property type="entry name" value="GDHRDH"/>
</dbReference>
<dbReference type="PRINTS" id="PR00080">
    <property type="entry name" value="SDRFAMILY"/>
</dbReference>
<dbReference type="SUPFAM" id="SSF51735">
    <property type="entry name" value="NAD(P)-binding Rossmann-fold domains"/>
    <property type="match status" value="1"/>
</dbReference>
<dbReference type="PROSITE" id="PS00061">
    <property type="entry name" value="ADH_SHORT"/>
    <property type="match status" value="1"/>
</dbReference>
<proteinExistence type="evidence at protein level"/>
<reference key="1">
    <citation type="journal article" date="2005" name="Science">
        <title>The transcriptional landscape of the mammalian genome.</title>
        <authorList>
            <person name="Carninci P."/>
            <person name="Kasukawa T."/>
            <person name="Katayama S."/>
            <person name="Gough J."/>
            <person name="Frith M.C."/>
            <person name="Maeda N."/>
            <person name="Oyama R."/>
            <person name="Ravasi T."/>
            <person name="Lenhard B."/>
            <person name="Wells C."/>
            <person name="Kodzius R."/>
            <person name="Shimokawa K."/>
            <person name="Bajic V.B."/>
            <person name="Brenner S.E."/>
            <person name="Batalov S."/>
            <person name="Forrest A.R."/>
            <person name="Zavolan M."/>
            <person name="Davis M.J."/>
            <person name="Wilming L.G."/>
            <person name="Aidinis V."/>
            <person name="Allen J.E."/>
            <person name="Ambesi-Impiombato A."/>
            <person name="Apweiler R."/>
            <person name="Aturaliya R.N."/>
            <person name="Bailey T.L."/>
            <person name="Bansal M."/>
            <person name="Baxter L."/>
            <person name="Beisel K.W."/>
            <person name="Bersano T."/>
            <person name="Bono H."/>
            <person name="Chalk A.M."/>
            <person name="Chiu K.P."/>
            <person name="Choudhary V."/>
            <person name="Christoffels A."/>
            <person name="Clutterbuck D.R."/>
            <person name="Crowe M.L."/>
            <person name="Dalla E."/>
            <person name="Dalrymple B.P."/>
            <person name="de Bono B."/>
            <person name="Della Gatta G."/>
            <person name="di Bernardo D."/>
            <person name="Down T."/>
            <person name="Engstrom P."/>
            <person name="Fagiolini M."/>
            <person name="Faulkner G."/>
            <person name="Fletcher C.F."/>
            <person name="Fukushima T."/>
            <person name="Furuno M."/>
            <person name="Futaki S."/>
            <person name="Gariboldi M."/>
            <person name="Georgii-Hemming P."/>
            <person name="Gingeras T.R."/>
            <person name="Gojobori T."/>
            <person name="Green R.E."/>
            <person name="Gustincich S."/>
            <person name="Harbers M."/>
            <person name="Hayashi Y."/>
            <person name="Hensch T.K."/>
            <person name="Hirokawa N."/>
            <person name="Hill D."/>
            <person name="Huminiecki L."/>
            <person name="Iacono M."/>
            <person name="Ikeo K."/>
            <person name="Iwama A."/>
            <person name="Ishikawa T."/>
            <person name="Jakt M."/>
            <person name="Kanapin A."/>
            <person name="Katoh M."/>
            <person name="Kawasawa Y."/>
            <person name="Kelso J."/>
            <person name="Kitamura H."/>
            <person name="Kitano H."/>
            <person name="Kollias G."/>
            <person name="Krishnan S.P."/>
            <person name="Kruger A."/>
            <person name="Kummerfeld S.K."/>
            <person name="Kurochkin I.V."/>
            <person name="Lareau L.F."/>
            <person name="Lazarevic D."/>
            <person name="Lipovich L."/>
            <person name="Liu J."/>
            <person name="Liuni S."/>
            <person name="McWilliam S."/>
            <person name="Madan Babu M."/>
            <person name="Madera M."/>
            <person name="Marchionni L."/>
            <person name="Matsuda H."/>
            <person name="Matsuzawa S."/>
            <person name="Miki H."/>
            <person name="Mignone F."/>
            <person name="Miyake S."/>
            <person name="Morris K."/>
            <person name="Mottagui-Tabar S."/>
            <person name="Mulder N."/>
            <person name="Nakano N."/>
            <person name="Nakauchi H."/>
            <person name="Ng P."/>
            <person name="Nilsson R."/>
            <person name="Nishiguchi S."/>
            <person name="Nishikawa S."/>
            <person name="Nori F."/>
            <person name="Ohara O."/>
            <person name="Okazaki Y."/>
            <person name="Orlando V."/>
            <person name="Pang K.C."/>
            <person name="Pavan W.J."/>
            <person name="Pavesi G."/>
            <person name="Pesole G."/>
            <person name="Petrovsky N."/>
            <person name="Piazza S."/>
            <person name="Reed J."/>
            <person name="Reid J.F."/>
            <person name="Ring B.Z."/>
            <person name="Ringwald M."/>
            <person name="Rost B."/>
            <person name="Ruan Y."/>
            <person name="Salzberg S.L."/>
            <person name="Sandelin A."/>
            <person name="Schneider C."/>
            <person name="Schoenbach C."/>
            <person name="Sekiguchi K."/>
            <person name="Semple C.A."/>
            <person name="Seno S."/>
            <person name="Sessa L."/>
            <person name="Sheng Y."/>
            <person name="Shibata Y."/>
            <person name="Shimada H."/>
            <person name="Shimada K."/>
            <person name="Silva D."/>
            <person name="Sinclair B."/>
            <person name="Sperling S."/>
            <person name="Stupka E."/>
            <person name="Sugiura K."/>
            <person name="Sultana R."/>
            <person name="Takenaka Y."/>
            <person name="Taki K."/>
            <person name="Tammoja K."/>
            <person name="Tan S.L."/>
            <person name="Tang S."/>
            <person name="Taylor M.S."/>
            <person name="Tegner J."/>
            <person name="Teichmann S.A."/>
            <person name="Ueda H.R."/>
            <person name="van Nimwegen E."/>
            <person name="Verardo R."/>
            <person name="Wei C.L."/>
            <person name="Yagi K."/>
            <person name="Yamanishi H."/>
            <person name="Zabarovsky E."/>
            <person name="Zhu S."/>
            <person name="Zimmer A."/>
            <person name="Hide W."/>
            <person name="Bult C."/>
            <person name="Grimmond S.M."/>
            <person name="Teasdale R.D."/>
            <person name="Liu E.T."/>
            <person name="Brusic V."/>
            <person name="Quackenbush J."/>
            <person name="Wahlestedt C."/>
            <person name="Mattick J.S."/>
            <person name="Hume D.A."/>
            <person name="Kai C."/>
            <person name="Sasaki D."/>
            <person name="Tomaru Y."/>
            <person name="Fukuda S."/>
            <person name="Kanamori-Katayama M."/>
            <person name="Suzuki M."/>
            <person name="Aoki J."/>
            <person name="Arakawa T."/>
            <person name="Iida J."/>
            <person name="Imamura K."/>
            <person name="Itoh M."/>
            <person name="Kato T."/>
            <person name="Kawaji H."/>
            <person name="Kawagashira N."/>
            <person name="Kawashima T."/>
            <person name="Kojima M."/>
            <person name="Kondo S."/>
            <person name="Konno H."/>
            <person name="Nakano K."/>
            <person name="Ninomiya N."/>
            <person name="Nishio T."/>
            <person name="Okada M."/>
            <person name="Plessy C."/>
            <person name="Shibata K."/>
            <person name="Shiraki T."/>
            <person name="Suzuki S."/>
            <person name="Tagami M."/>
            <person name="Waki K."/>
            <person name="Watahiki A."/>
            <person name="Okamura-Oho Y."/>
            <person name="Suzuki H."/>
            <person name="Kawai J."/>
            <person name="Hayashizaki Y."/>
        </authorList>
    </citation>
    <scope>NUCLEOTIDE SEQUENCE [LARGE SCALE MRNA]</scope>
    <source>
        <strain>C57BL/6J</strain>
        <strain>DBA/2J</strain>
        <tissue>Testis</tissue>
        <tissue>Thymus</tissue>
    </source>
</reference>
<reference key="2">
    <citation type="journal article" date="2004" name="Genome Res.">
        <title>The status, quality, and expansion of the NIH full-length cDNA project: the Mammalian Gene Collection (MGC).</title>
        <authorList>
            <consortium name="The MGC Project Team"/>
        </authorList>
    </citation>
    <scope>NUCLEOTIDE SEQUENCE [LARGE SCALE MRNA]</scope>
    <source>
        <strain>FVB/N</strain>
        <tissue>Kidney</tissue>
        <tissue>Liver</tissue>
    </source>
</reference>
<reference key="3">
    <citation type="submission" date="2007-04" db="UniProtKB">
        <authorList>
            <person name="Lubec G."/>
            <person name="Kang S.U."/>
        </authorList>
    </citation>
    <scope>PROTEIN SEQUENCE OF 224-252</scope>
    <scope>IDENTIFICATION BY MASS SPECTROMETRY</scope>
    <source>
        <strain>C57BL/6J</strain>
        <tissue>Brain</tissue>
    </source>
</reference>
<reference key="4">
    <citation type="journal article" date="2010" name="Cell">
        <title>A tissue-specific atlas of mouse protein phosphorylation and expression.</title>
        <authorList>
            <person name="Huttlin E.L."/>
            <person name="Jedrychowski M.P."/>
            <person name="Elias J.E."/>
            <person name="Goswami T."/>
            <person name="Rad R."/>
            <person name="Beausoleil S.A."/>
            <person name="Villen J."/>
            <person name="Haas W."/>
            <person name="Sowa M.E."/>
            <person name="Gygi S.P."/>
        </authorList>
    </citation>
    <scope>IDENTIFICATION BY MASS SPECTROMETRY [LARGE SCALE ANALYSIS]</scope>
    <source>
        <tissue>Brain</tissue>
        <tissue>Heart</tissue>
        <tissue>Kidney</tissue>
        <tissue>Liver</tissue>
        <tissue>Lung</tissue>
        <tissue>Pancreas</tissue>
        <tissue>Spleen</tissue>
        <tissue>Testis</tissue>
    </source>
</reference>
<reference key="5">
    <citation type="journal article" date="2013" name="Mol. Cell">
        <title>SIRT5-mediated lysine desuccinylation impacts diverse metabolic pathways.</title>
        <authorList>
            <person name="Park J."/>
            <person name="Chen Y."/>
            <person name="Tishkoff D.X."/>
            <person name="Peng C."/>
            <person name="Tan M."/>
            <person name="Dai L."/>
            <person name="Xie Z."/>
            <person name="Zhang Y."/>
            <person name="Zwaans B.M."/>
            <person name="Skinner M.E."/>
            <person name="Lombard D.B."/>
            <person name="Zhao Y."/>
        </authorList>
    </citation>
    <scope>SUCCINYLATION [LARGE SCALE ANALYSIS] AT LYS-103 AND LYS-259</scope>
    <scope>IDENTIFICATION BY MASS SPECTROMETRY [LARGE SCALE ANALYSIS]</scope>
    <source>
        <tissue>Liver</tissue>
    </source>
</reference>
<reference key="6">
    <citation type="journal article" date="2013" name="Proc. Natl. Acad. Sci. U.S.A.">
        <title>Label-free quantitative proteomics of the lysine acetylome in mitochondria identifies substrates of SIRT3 in metabolic pathways.</title>
        <authorList>
            <person name="Rardin M.J."/>
            <person name="Newman J.C."/>
            <person name="Held J.M."/>
            <person name="Cusack M.P."/>
            <person name="Sorensen D.J."/>
            <person name="Li B."/>
            <person name="Schilling B."/>
            <person name="Mooney S.D."/>
            <person name="Kahn C.R."/>
            <person name="Verdin E."/>
            <person name="Gibson B.W."/>
        </authorList>
    </citation>
    <scope>ACETYLATION [LARGE SCALE ANALYSIS] AT LYS-73; LYS-97; LYS-103; LYS-132; LYS-177; LYS-212; LYS-258; LYS-259 AND LYS-280</scope>
    <scope>IDENTIFICATION BY MASS SPECTROMETRY [LARGE SCALE ANALYSIS]</scope>
    <source>
        <tissue>Liver</tissue>
    </source>
</reference>
<feature type="transit peptide" description="Mitochondrion" evidence="1">
    <location>
        <begin position="1"/>
        <end position="46"/>
    </location>
</feature>
<feature type="chain" id="PRO_0000031961" description="D-beta-hydroxybutyrate dehydrogenase, mitochondrial">
    <location>
        <begin position="47"/>
        <end position="343"/>
    </location>
</feature>
<feature type="active site" description="Proton acceptor" evidence="5">
    <location>
        <position position="209"/>
    </location>
</feature>
<feature type="binding site" evidence="1">
    <location>
        <begin position="60"/>
        <end position="84"/>
    </location>
    <ligand>
        <name>NAD(+)</name>
        <dbReference type="ChEBI" id="CHEBI:57540"/>
    </ligand>
</feature>
<feature type="binding site" evidence="1">
    <location>
        <position position="196"/>
    </location>
    <ligand>
        <name>substrate</name>
    </ligand>
</feature>
<feature type="modified residue" description="N6-acetyllysine" evidence="8">
    <location>
        <position position="73"/>
    </location>
</feature>
<feature type="modified residue" description="N6-acetyllysine" evidence="8">
    <location>
        <position position="97"/>
    </location>
</feature>
<feature type="modified residue" description="N6-acetyllysine; alternate" evidence="8">
    <location>
        <position position="103"/>
    </location>
</feature>
<feature type="modified residue" description="N6-succinyllysine; alternate" evidence="9">
    <location>
        <position position="103"/>
    </location>
</feature>
<feature type="modified residue" description="N6-acetyllysine" evidence="8">
    <location>
        <position position="132"/>
    </location>
</feature>
<feature type="modified residue" description="N6-acetyllysine" evidence="8">
    <location>
        <position position="177"/>
    </location>
</feature>
<feature type="modified residue" description="N6-acetyllysine" evidence="8">
    <location>
        <position position="212"/>
    </location>
</feature>
<feature type="modified residue" description="Phosphoserine" evidence="2">
    <location>
        <position position="246"/>
    </location>
</feature>
<feature type="modified residue" description="N6-acetyllysine" evidence="8">
    <location>
        <position position="258"/>
    </location>
</feature>
<feature type="modified residue" description="N6-acetyllysine; alternate" evidence="8">
    <location>
        <position position="259"/>
    </location>
</feature>
<feature type="modified residue" description="N6-succinyllysine; alternate" evidence="9">
    <location>
        <position position="259"/>
    </location>
</feature>
<feature type="modified residue" description="N6-acetyllysine" evidence="8">
    <location>
        <position position="280"/>
    </location>
</feature>
<feature type="glycosylation site" description="O-linked (GlcNAc) serine" evidence="1">
    <location>
        <position position="219"/>
    </location>
</feature>
<feature type="sequence conflict" description="In Ref. 1; BAC36453." evidence="6" ref="1">
    <original>E</original>
    <variation>G</variation>
    <location>
        <position position="152"/>
    </location>
</feature>
<feature type="sequence conflict" description="In Ref. 1; BAC36453/BAE23523/BAE26605." evidence="6" ref="1">
    <original>I</original>
    <variation>V</variation>
    <location>
        <position position="215"/>
    </location>
</feature>
<comment type="catalytic activity">
    <reaction evidence="2">
        <text>(R)-3-hydroxybutanoate + NAD(+) = acetoacetate + NADH + H(+)</text>
        <dbReference type="Rhea" id="RHEA:20521"/>
        <dbReference type="ChEBI" id="CHEBI:10983"/>
        <dbReference type="ChEBI" id="CHEBI:13705"/>
        <dbReference type="ChEBI" id="CHEBI:15378"/>
        <dbReference type="ChEBI" id="CHEBI:57540"/>
        <dbReference type="ChEBI" id="CHEBI:57945"/>
        <dbReference type="EC" id="1.1.1.30"/>
    </reaction>
</comment>
<comment type="activity regulation">
    <text evidence="3">Requires phosphatidylcholine as an allosteric activator for enzymatic activity.</text>
</comment>
<comment type="subunit">
    <text evidence="3">Homotetramer.</text>
</comment>
<comment type="subcellular location">
    <subcellularLocation>
        <location evidence="3">Mitochondrion inner membrane</location>
    </subcellularLocation>
    <subcellularLocation>
        <location evidence="3">Mitochondrion matrix</location>
    </subcellularLocation>
</comment>
<comment type="PTM">
    <text>Acetylation of Lys-132 is observed in liver mitochondria from fasted mice but not from fed mice.</text>
</comment>
<comment type="similarity">
    <text evidence="6">Belongs to the short-chain dehydrogenases/reductases (SDR) family.</text>
</comment>
<accession>Q80XN0</accession>
<accession>Q3UJS9</accession>
<accession>Q3UL45</accession>
<accession>Q8BK53</accession>
<accession>Q8R0C8</accession>
<sequence>MLAARLSRPLSQLPGKALSVRDRENGTRHTLLFYPASFSPDTRRTYASQADAASGKAILITGCDSGFGFSLAKHLHSKGFLVFAGCLMKDKGDAGVKELDSLKSDRLRTIQLNVCNSEEVEKAVETIRSGLKDPEKGMWGLVNNAGISTFGEVEFTSMETYKEVAEVNLWGTVRTTKSFLPLLRRAKGRVVNISSMLGRMANPARSPYCITKFGIEAFSDCLRYEMHPLGVKVSVVEPGNFIAATSLYSPERIQAIAKKMWDDLPEVVRKDYGRKYFDEKIAKMETYCNSGSTDTSSVINAVTHALTAATPYTRYHPMDYYWWLRMQIMTHFPGAISDKIYIH</sequence>
<name>BDH_MOUSE</name>
<protein>
    <recommendedName>
        <fullName evidence="6">D-beta-hydroxybutyrate dehydrogenase, mitochondrial</fullName>
        <ecNumber evidence="2">1.1.1.30</ecNumber>
    </recommendedName>
    <alternativeName>
        <fullName evidence="4">3-hydroxybutyrate dehydrogenase</fullName>
        <shortName evidence="4">BDH</shortName>
    </alternativeName>
</protein>